<feature type="chain" id="PRO_1000165647" description="Photosystem II reaction center protein I">
    <location>
        <begin position="1"/>
        <end position="38"/>
    </location>
</feature>
<feature type="transmembrane region" description="Helical" evidence="1">
    <location>
        <begin position="6"/>
        <end position="26"/>
    </location>
</feature>
<sequence length="38" mass="4435">METLKITVYIVITFFVLLFVFGFLSGDPSRNPKRKDLE</sequence>
<reference key="1">
    <citation type="journal article" date="2011" name="MBio">
        <title>Novel metabolic attributes of the genus Cyanothece, comprising a group of unicellular nitrogen-fixing Cyanobacteria.</title>
        <authorList>
            <person name="Bandyopadhyay A."/>
            <person name="Elvitigala T."/>
            <person name="Welsh E."/>
            <person name="Stockel J."/>
            <person name="Liberton M."/>
            <person name="Min H."/>
            <person name="Sherman L.A."/>
            <person name="Pakrasi H.B."/>
        </authorList>
    </citation>
    <scope>NUCLEOTIDE SEQUENCE [LARGE SCALE GENOMIC DNA]</scope>
    <source>
        <strain>PCC 7425 / ATCC 29141</strain>
    </source>
</reference>
<keyword id="KW-0472">Membrane</keyword>
<keyword id="KW-0602">Photosynthesis</keyword>
<keyword id="KW-0604">Photosystem II</keyword>
<keyword id="KW-0674">Reaction center</keyword>
<keyword id="KW-0793">Thylakoid</keyword>
<keyword id="KW-0812">Transmembrane</keyword>
<keyword id="KW-1133">Transmembrane helix</keyword>
<protein>
    <recommendedName>
        <fullName evidence="1">Photosystem II reaction center protein I</fullName>
        <shortName evidence="1">PSII-I</shortName>
    </recommendedName>
    <alternativeName>
        <fullName evidence="1">PSII 4.4 kDa protein</fullName>
    </alternativeName>
</protein>
<dbReference type="EMBL" id="CP001344">
    <property type="protein sequence ID" value="ACL44449.1"/>
    <property type="molecule type" value="Genomic_DNA"/>
</dbReference>
<dbReference type="SMR" id="B8HUA4"/>
<dbReference type="STRING" id="395961.Cyan7425_2086"/>
<dbReference type="KEGG" id="cyn:Cyan7425_2086"/>
<dbReference type="eggNOG" id="ENOG5033CII">
    <property type="taxonomic scope" value="Bacteria"/>
</dbReference>
<dbReference type="HOGENOM" id="CLU_212150_0_0_3"/>
<dbReference type="GO" id="GO:0009539">
    <property type="term" value="C:photosystem II reaction center"/>
    <property type="evidence" value="ECO:0007669"/>
    <property type="project" value="InterPro"/>
</dbReference>
<dbReference type="GO" id="GO:0031676">
    <property type="term" value="C:plasma membrane-derived thylakoid membrane"/>
    <property type="evidence" value="ECO:0007669"/>
    <property type="project" value="UniProtKB-SubCell"/>
</dbReference>
<dbReference type="GO" id="GO:0015979">
    <property type="term" value="P:photosynthesis"/>
    <property type="evidence" value="ECO:0007669"/>
    <property type="project" value="UniProtKB-UniRule"/>
</dbReference>
<dbReference type="HAMAP" id="MF_01316">
    <property type="entry name" value="PSII_PsbI"/>
    <property type="match status" value="1"/>
</dbReference>
<dbReference type="InterPro" id="IPR003686">
    <property type="entry name" value="PSII_PsbI"/>
</dbReference>
<dbReference type="InterPro" id="IPR037271">
    <property type="entry name" value="PSII_PsbI_sf"/>
</dbReference>
<dbReference type="NCBIfam" id="NF002735">
    <property type="entry name" value="PRK02655.1"/>
    <property type="match status" value="1"/>
</dbReference>
<dbReference type="PANTHER" id="PTHR35772">
    <property type="entry name" value="PHOTOSYSTEM II REACTION CENTER PROTEIN I"/>
    <property type="match status" value="1"/>
</dbReference>
<dbReference type="PANTHER" id="PTHR35772:SF1">
    <property type="entry name" value="PHOTOSYSTEM II REACTION CENTER PROTEIN I"/>
    <property type="match status" value="1"/>
</dbReference>
<dbReference type="Pfam" id="PF02532">
    <property type="entry name" value="PsbI"/>
    <property type="match status" value="1"/>
</dbReference>
<dbReference type="SUPFAM" id="SSF161041">
    <property type="entry name" value="Photosystem II reaction center protein I, PsbI"/>
    <property type="match status" value="1"/>
</dbReference>
<name>PSBI_CYAP4</name>
<evidence type="ECO:0000255" key="1">
    <source>
        <dbReference type="HAMAP-Rule" id="MF_01316"/>
    </source>
</evidence>
<organism>
    <name type="scientific">Cyanothece sp. (strain PCC 7425 / ATCC 29141)</name>
    <dbReference type="NCBI Taxonomy" id="395961"/>
    <lineage>
        <taxon>Bacteria</taxon>
        <taxon>Bacillati</taxon>
        <taxon>Cyanobacteriota</taxon>
        <taxon>Cyanophyceae</taxon>
        <taxon>Gomontiellales</taxon>
        <taxon>Cyanothecaceae</taxon>
        <taxon>Cyanothece</taxon>
    </lineage>
</organism>
<gene>
    <name evidence="1" type="primary">psbI</name>
    <name type="ordered locus">Cyan7425_2086</name>
</gene>
<proteinExistence type="inferred from homology"/>
<accession>B8HUA4</accession>
<comment type="function">
    <text evidence="1">One of the components of the core complex of photosystem II (PSII), required for its stability and/or assembly. PSII is a light-driven water:plastoquinone oxidoreductase that uses light energy to abstract electrons from H(2)O, generating O(2) and a proton gradient subsequently used for ATP formation. It consists of a core antenna complex that captures photons, and an electron transfer chain that converts photonic excitation into a charge separation.</text>
</comment>
<comment type="subunit">
    <text evidence="1">PSII is composed of 1 copy each of membrane proteins PsbA, PsbB, PsbC, PsbD, PsbE, PsbF, PsbH, PsbI, PsbJ, PsbK, PsbL, PsbM, PsbT, PsbX, PsbY, PsbZ, Psb30/Ycf12, peripheral proteins PsbO, CyanoQ (PsbQ), PsbU, PsbV and a large number of cofactors. It forms dimeric complexes.</text>
</comment>
<comment type="subcellular location">
    <subcellularLocation>
        <location evidence="1">Cellular thylakoid membrane</location>
        <topology evidence="1">Single-pass membrane protein</topology>
    </subcellularLocation>
</comment>
<comment type="similarity">
    <text evidence="1">Belongs to the PsbI family.</text>
</comment>